<sequence>MACLTLALDAMGGDFGPCVTVPASLQALASNPQLKLLLVGNPDTITPLLANADSLLLERLQVIPAEHVIASDAKPSQAIRASRGTSMRVALELVKNGEAAACVSAGNTGALMGLAKMMIKPLEGIARPALMTVIPNQRRSKTVVLDLGANVECDSTMLVQFAVMGSVMAEEVVGIVEPRVALLNIGEEENKGLDNIREAAAVLKNTPAINYIGYLEGNDLLTGKTDVMVCDGFVGNVTLKTMEGVIRMFLSLLKPSGEGSKQSWWLKLIGRWLQKRVAKRFGHLNPDQYNGACLLGLRGIVIKSHGAANQRAFAVAIEQAVQAVQRQVPERIAARLEAVLPKSD</sequence>
<reference key="1">
    <citation type="submission" date="2008-02" db="EMBL/GenBank/DDBJ databases">
        <title>Complete sequence of Yersinia pseudotuberculosis YPIII.</title>
        <authorList>
            <consortium name="US DOE Joint Genome Institute"/>
            <person name="Copeland A."/>
            <person name="Lucas S."/>
            <person name="Lapidus A."/>
            <person name="Glavina del Rio T."/>
            <person name="Dalin E."/>
            <person name="Tice H."/>
            <person name="Bruce D."/>
            <person name="Goodwin L."/>
            <person name="Pitluck S."/>
            <person name="Munk A.C."/>
            <person name="Brettin T."/>
            <person name="Detter J.C."/>
            <person name="Han C."/>
            <person name="Tapia R."/>
            <person name="Schmutz J."/>
            <person name="Larimer F."/>
            <person name="Land M."/>
            <person name="Hauser L."/>
            <person name="Challacombe J.F."/>
            <person name="Green L."/>
            <person name="Lindler L.E."/>
            <person name="Nikolich M.P."/>
            <person name="Richardson P."/>
        </authorList>
    </citation>
    <scope>NUCLEOTIDE SEQUENCE [LARGE SCALE GENOMIC DNA]</scope>
    <source>
        <strain>YPIII</strain>
    </source>
</reference>
<organism>
    <name type="scientific">Yersinia pseudotuberculosis serotype O:3 (strain YPIII)</name>
    <dbReference type="NCBI Taxonomy" id="502800"/>
    <lineage>
        <taxon>Bacteria</taxon>
        <taxon>Pseudomonadati</taxon>
        <taxon>Pseudomonadota</taxon>
        <taxon>Gammaproteobacteria</taxon>
        <taxon>Enterobacterales</taxon>
        <taxon>Yersiniaceae</taxon>
        <taxon>Yersinia</taxon>
    </lineage>
</organism>
<accession>B1JHI2</accession>
<keyword id="KW-0963">Cytoplasm</keyword>
<keyword id="KW-0444">Lipid biosynthesis</keyword>
<keyword id="KW-0443">Lipid metabolism</keyword>
<keyword id="KW-0594">Phospholipid biosynthesis</keyword>
<keyword id="KW-1208">Phospholipid metabolism</keyword>
<keyword id="KW-0808">Transferase</keyword>
<evidence type="ECO:0000255" key="1">
    <source>
        <dbReference type="HAMAP-Rule" id="MF_00019"/>
    </source>
</evidence>
<proteinExistence type="inferred from homology"/>
<name>PLSX_YERPY</name>
<gene>
    <name evidence="1" type="primary">plsX</name>
    <name type="ordered locus">YPK_1683</name>
</gene>
<feature type="chain" id="PRO_1000089954" description="Phosphate acyltransferase">
    <location>
        <begin position="1"/>
        <end position="344"/>
    </location>
</feature>
<dbReference type="EC" id="2.3.1.274" evidence="1"/>
<dbReference type="EMBL" id="CP000950">
    <property type="protein sequence ID" value="ACA67976.1"/>
    <property type="molecule type" value="Genomic_DNA"/>
</dbReference>
<dbReference type="RefSeq" id="WP_002210932.1">
    <property type="nucleotide sequence ID" value="NZ_CP009792.1"/>
</dbReference>
<dbReference type="SMR" id="B1JHI2"/>
<dbReference type="GeneID" id="57976975"/>
<dbReference type="KEGG" id="ypy:YPK_1683"/>
<dbReference type="UniPathway" id="UPA00085"/>
<dbReference type="GO" id="GO:0005737">
    <property type="term" value="C:cytoplasm"/>
    <property type="evidence" value="ECO:0007669"/>
    <property type="project" value="UniProtKB-SubCell"/>
</dbReference>
<dbReference type="GO" id="GO:0043811">
    <property type="term" value="F:phosphate:acyl-[acyl carrier protein] acyltransferase activity"/>
    <property type="evidence" value="ECO:0007669"/>
    <property type="project" value="UniProtKB-UniRule"/>
</dbReference>
<dbReference type="GO" id="GO:0006633">
    <property type="term" value="P:fatty acid biosynthetic process"/>
    <property type="evidence" value="ECO:0007669"/>
    <property type="project" value="UniProtKB-UniRule"/>
</dbReference>
<dbReference type="GO" id="GO:0008654">
    <property type="term" value="P:phospholipid biosynthetic process"/>
    <property type="evidence" value="ECO:0007669"/>
    <property type="project" value="UniProtKB-KW"/>
</dbReference>
<dbReference type="FunFam" id="3.40.718.10:FF:000008">
    <property type="entry name" value="Phosphate acyltransferase"/>
    <property type="match status" value="1"/>
</dbReference>
<dbReference type="Gene3D" id="3.40.718.10">
    <property type="entry name" value="Isopropylmalate Dehydrogenase"/>
    <property type="match status" value="1"/>
</dbReference>
<dbReference type="HAMAP" id="MF_00019">
    <property type="entry name" value="PlsX"/>
    <property type="match status" value="1"/>
</dbReference>
<dbReference type="InterPro" id="IPR003664">
    <property type="entry name" value="FA_synthesis"/>
</dbReference>
<dbReference type="InterPro" id="IPR012281">
    <property type="entry name" value="Phospholipid_synth_PlsX-like"/>
</dbReference>
<dbReference type="NCBIfam" id="TIGR00182">
    <property type="entry name" value="plsX"/>
    <property type="match status" value="1"/>
</dbReference>
<dbReference type="PANTHER" id="PTHR30100">
    <property type="entry name" value="FATTY ACID/PHOSPHOLIPID SYNTHESIS PROTEIN PLSX"/>
    <property type="match status" value="1"/>
</dbReference>
<dbReference type="PANTHER" id="PTHR30100:SF1">
    <property type="entry name" value="PHOSPHATE ACYLTRANSFERASE"/>
    <property type="match status" value="1"/>
</dbReference>
<dbReference type="Pfam" id="PF02504">
    <property type="entry name" value="FA_synthesis"/>
    <property type="match status" value="1"/>
</dbReference>
<dbReference type="PIRSF" id="PIRSF002465">
    <property type="entry name" value="Phsphlp_syn_PlsX"/>
    <property type="match status" value="1"/>
</dbReference>
<dbReference type="SUPFAM" id="SSF53659">
    <property type="entry name" value="Isocitrate/Isopropylmalate dehydrogenase-like"/>
    <property type="match status" value="1"/>
</dbReference>
<protein>
    <recommendedName>
        <fullName evidence="1">Phosphate acyltransferase</fullName>
        <ecNumber evidence="1">2.3.1.274</ecNumber>
    </recommendedName>
    <alternativeName>
        <fullName evidence="1">Acyl-ACP phosphotransacylase</fullName>
    </alternativeName>
    <alternativeName>
        <fullName evidence="1">Acyl-[acyl-carrier-protein]--phosphate acyltransferase</fullName>
    </alternativeName>
    <alternativeName>
        <fullName evidence="1">Phosphate-acyl-ACP acyltransferase</fullName>
    </alternativeName>
</protein>
<comment type="function">
    <text evidence="1">Catalyzes the reversible formation of acyl-phosphate (acyl-PO(4)) from acyl-[acyl-carrier-protein] (acyl-ACP). This enzyme utilizes acyl-ACP as fatty acyl donor, but not acyl-CoA.</text>
</comment>
<comment type="catalytic activity">
    <reaction evidence="1">
        <text>a fatty acyl-[ACP] + phosphate = an acyl phosphate + holo-[ACP]</text>
        <dbReference type="Rhea" id="RHEA:42292"/>
        <dbReference type="Rhea" id="RHEA-COMP:9685"/>
        <dbReference type="Rhea" id="RHEA-COMP:14125"/>
        <dbReference type="ChEBI" id="CHEBI:43474"/>
        <dbReference type="ChEBI" id="CHEBI:59918"/>
        <dbReference type="ChEBI" id="CHEBI:64479"/>
        <dbReference type="ChEBI" id="CHEBI:138651"/>
        <dbReference type="EC" id="2.3.1.274"/>
    </reaction>
</comment>
<comment type="pathway">
    <text evidence="1">Lipid metabolism; phospholipid metabolism.</text>
</comment>
<comment type="subunit">
    <text evidence="1">Homodimer. Probably interacts with PlsY.</text>
</comment>
<comment type="subcellular location">
    <subcellularLocation>
        <location evidence="1">Cytoplasm</location>
    </subcellularLocation>
    <text evidence="1">Associated with the membrane possibly through PlsY.</text>
</comment>
<comment type="similarity">
    <text evidence="1">Belongs to the PlsX family.</text>
</comment>